<name>YIDD_THEMA</name>
<keyword id="KW-0997">Cell inner membrane</keyword>
<keyword id="KW-1003">Cell membrane</keyword>
<keyword id="KW-0472">Membrane</keyword>
<keyword id="KW-1185">Reference proteome</keyword>
<proteinExistence type="inferred from homology"/>
<gene>
    <name type="ordered locus">TM_1462</name>
</gene>
<feature type="chain" id="PRO_0000171890" description="Putative membrane protein insertion efficiency factor">
    <location>
        <begin position="1"/>
        <end position="81"/>
    </location>
</feature>
<protein>
    <recommendedName>
        <fullName evidence="1">Putative membrane protein insertion efficiency factor</fullName>
    </recommendedName>
</protein>
<accession>Q9X1H3</accession>
<organism>
    <name type="scientific">Thermotoga maritima (strain ATCC 43589 / DSM 3109 / JCM 10099 / NBRC 100826 / MSB8)</name>
    <dbReference type="NCBI Taxonomy" id="243274"/>
    <lineage>
        <taxon>Bacteria</taxon>
        <taxon>Thermotogati</taxon>
        <taxon>Thermotogota</taxon>
        <taxon>Thermotogae</taxon>
        <taxon>Thermotogales</taxon>
        <taxon>Thermotogaceae</taxon>
        <taxon>Thermotoga</taxon>
    </lineage>
</organism>
<reference key="1">
    <citation type="journal article" date="1999" name="Nature">
        <title>Evidence for lateral gene transfer between Archaea and Bacteria from genome sequence of Thermotoga maritima.</title>
        <authorList>
            <person name="Nelson K.E."/>
            <person name="Clayton R.A."/>
            <person name="Gill S.R."/>
            <person name="Gwinn M.L."/>
            <person name="Dodson R.J."/>
            <person name="Haft D.H."/>
            <person name="Hickey E.K."/>
            <person name="Peterson J.D."/>
            <person name="Nelson W.C."/>
            <person name="Ketchum K.A."/>
            <person name="McDonald L.A."/>
            <person name="Utterback T.R."/>
            <person name="Malek J.A."/>
            <person name="Linher K.D."/>
            <person name="Garrett M.M."/>
            <person name="Stewart A.M."/>
            <person name="Cotton M.D."/>
            <person name="Pratt M.S."/>
            <person name="Phillips C.A."/>
            <person name="Richardson D.L."/>
            <person name="Heidelberg J.F."/>
            <person name="Sutton G.G."/>
            <person name="Fleischmann R.D."/>
            <person name="Eisen J.A."/>
            <person name="White O."/>
            <person name="Salzberg S.L."/>
            <person name="Smith H.O."/>
            <person name="Venter J.C."/>
            <person name="Fraser C.M."/>
        </authorList>
    </citation>
    <scope>NUCLEOTIDE SEQUENCE [LARGE SCALE GENOMIC DNA]</scope>
    <source>
        <strain>ATCC 43589 / DSM 3109 / JCM 10099 / NBRC 100826 / MSB8</strain>
    </source>
</reference>
<comment type="function">
    <text evidence="1">Could be involved in insertion of integral membrane proteins into the membrane.</text>
</comment>
<comment type="subcellular location">
    <subcellularLocation>
        <location evidence="1">Cell inner membrane</location>
        <topology evidence="1">Peripheral membrane protein</topology>
        <orientation evidence="1">Cytoplasmic side</orientation>
    </subcellularLocation>
</comment>
<comment type="similarity">
    <text evidence="1">Belongs to the UPF0161 family.</text>
</comment>
<evidence type="ECO:0000255" key="1">
    <source>
        <dbReference type="HAMAP-Rule" id="MF_00386"/>
    </source>
</evidence>
<dbReference type="EMBL" id="AE000512">
    <property type="protein sequence ID" value="AAD36530.1"/>
    <property type="molecule type" value="Genomic_DNA"/>
</dbReference>
<dbReference type="PIR" id="G72251">
    <property type="entry name" value="G72251"/>
</dbReference>
<dbReference type="RefSeq" id="NP_229261.1">
    <property type="nucleotide sequence ID" value="NC_000853.1"/>
</dbReference>
<dbReference type="FunCoup" id="Q9X1H3">
    <property type="interactions" value="242"/>
</dbReference>
<dbReference type="STRING" id="243274.TM_1462"/>
<dbReference type="PaxDb" id="243274-THEMA_07005"/>
<dbReference type="EnsemblBacteria" id="AAD36530">
    <property type="protein sequence ID" value="AAD36530"/>
    <property type="gene ID" value="TM_1462"/>
</dbReference>
<dbReference type="KEGG" id="tma:TM1462"/>
<dbReference type="KEGG" id="tmi:THEMA_07005"/>
<dbReference type="KEGG" id="tmm:Tmari_1468"/>
<dbReference type="KEGG" id="tmw:THMA_1492"/>
<dbReference type="eggNOG" id="COG0759">
    <property type="taxonomic scope" value="Bacteria"/>
</dbReference>
<dbReference type="InParanoid" id="Q9X1H3"/>
<dbReference type="OrthoDB" id="9801753at2"/>
<dbReference type="Proteomes" id="UP000008183">
    <property type="component" value="Chromosome"/>
</dbReference>
<dbReference type="GO" id="GO:0005886">
    <property type="term" value="C:plasma membrane"/>
    <property type="evidence" value="ECO:0007669"/>
    <property type="project" value="UniProtKB-SubCell"/>
</dbReference>
<dbReference type="HAMAP" id="MF_00386">
    <property type="entry name" value="UPF0161_YidD"/>
    <property type="match status" value="1"/>
</dbReference>
<dbReference type="InterPro" id="IPR002696">
    <property type="entry name" value="Membr_insert_effic_factor_YidD"/>
</dbReference>
<dbReference type="NCBIfam" id="TIGR00278">
    <property type="entry name" value="membrane protein insertion efficiency factor YidD"/>
    <property type="match status" value="1"/>
</dbReference>
<dbReference type="PANTHER" id="PTHR33383">
    <property type="entry name" value="MEMBRANE PROTEIN INSERTION EFFICIENCY FACTOR-RELATED"/>
    <property type="match status" value="1"/>
</dbReference>
<dbReference type="PANTHER" id="PTHR33383:SF1">
    <property type="entry name" value="MEMBRANE PROTEIN INSERTION EFFICIENCY FACTOR-RELATED"/>
    <property type="match status" value="1"/>
</dbReference>
<dbReference type="Pfam" id="PF01809">
    <property type="entry name" value="YidD"/>
    <property type="match status" value="1"/>
</dbReference>
<dbReference type="SMART" id="SM01234">
    <property type="entry name" value="Haemolytic"/>
    <property type="match status" value="1"/>
</dbReference>
<sequence length="81" mass="9622">MKKLLIMLIRFYQRYISPLKPPTCRFTPTCSNYFIQALEKHGLLKGTFLGLRRILRCNPLSKGGYDPVPEEFSFKPRRRWS</sequence>